<accession>P40954</accession>
<accession>A0A1D8PU43</accession>
<accession>Q5ACQ6</accession>
<reference key="1">
    <citation type="journal article" date="1995" name="Proc. Natl. Acad. Sci. U.S.A.">
        <title>Molecular cloning and characterization of chitinase genes from Candida albicans.</title>
        <authorList>
            <person name="McCreath K.J."/>
            <person name="Specht C.A."/>
            <person name="Robbins P.W."/>
        </authorList>
    </citation>
    <scope>NUCLEOTIDE SEQUENCE [GENOMIC DNA]</scope>
    <scope>INDUCTION</scope>
    <source>
        <strain>ATCC 10261 / CBS 2718 / NBRC 1061</strain>
    </source>
</reference>
<reference key="2">
    <citation type="journal article" date="2004" name="Proc. Natl. Acad. Sci. U.S.A.">
        <title>The diploid genome sequence of Candida albicans.</title>
        <authorList>
            <person name="Jones T."/>
            <person name="Federspiel N.A."/>
            <person name="Chibana H."/>
            <person name="Dungan J."/>
            <person name="Kalman S."/>
            <person name="Magee B.B."/>
            <person name="Newport G."/>
            <person name="Thorstenson Y.R."/>
            <person name="Agabian N."/>
            <person name="Magee P.T."/>
            <person name="Davis R.W."/>
            <person name="Scherer S."/>
        </authorList>
    </citation>
    <scope>NUCLEOTIDE SEQUENCE [LARGE SCALE GENOMIC DNA]</scope>
    <source>
        <strain>SC5314 / ATCC MYA-2876</strain>
    </source>
</reference>
<reference key="3">
    <citation type="journal article" date="2007" name="Genome Biol.">
        <title>Assembly of the Candida albicans genome into sixteen supercontigs aligned on the eight chromosomes.</title>
        <authorList>
            <person name="van het Hoog M."/>
            <person name="Rast T.J."/>
            <person name="Martchenko M."/>
            <person name="Grindle S."/>
            <person name="Dignard D."/>
            <person name="Hogues H."/>
            <person name="Cuomo C."/>
            <person name="Berriman M."/>
            <person name="Scherer S."/>
            <person name="Magee B.B."/>
            <person name="Whiteway M."/>
            <person name="Chibana H."/>
            <person name="Nantel A."/>
            <person name="Magee P.T."/>
        </authorList>
    </citation>
    <scope>GENOME REANNOTATION</scope>
    <source>
        <strain>SC5314 / ATCC MYA-2876</strain>
    </source>
</reference>
<reference key="4">
    <citation type="journal article" date="2013" name="Genome Biol.">
        <title>Assembly of a phased diploid Candida albicans genome facilitates allele-specific measurements and provides a simple model for repeat and indel structure.</title>
        <authorList>
            <person name="Muzzey D."/>
            <person name="Schwartz K."/>
            <person name="Weissman J.S."/>
            <person name="Sherlock G."/>
        </authorList>
    </citation>
    <scope>NUCLEOTIDE SEQUENCE [LARGE SCALE GENOMIC DNA]</scope>
    <scope>GENOME REANNOTATION</scope>
    <source>
        <strain>SC5314 / ATCC MYA-2876</strain>
    </source>
</reference>
<reference key="5">
    <citation type="journal article" date="2004" name="Mol. Microbiol.">
        <title>The Candida albicans CaACE2 gene affects morphogenesis, adherence and virulence.</title>
        <authorList>
            <person name="Kelly M.T."/>
            <person name="MacCallum D.M."/>
            <person name="Clancy S.D."/>
            <person name="Odds F.C."/>
            <person name="Brown A.J."/>
            <person name="Butler G."/>
        </authorList>
    </citation>
    <scope>INDUCTION</scope>
</reference>
<reference key="6">
    <citation type="journal article" date="2005" name="Fungal Genet. Biol.">
        <title>Candida albicans CHT3 encodes the functional homolog of the Cts1 chitinase of Saccharomyces cerevisiae.</title>
        <authorList>
            <person name="Dunkler A."/>
            <person name="Walther A."/>
            <person name="Specht C.A."/>
            <person name="Wendland J."/>
        </authorList>
    </citation>
    <scope>FUNCTION</scope>
    <scope>CATALYTIC ACTIVITY</scope>
    <scope>DISRUPTION PHENOTYPE</scope>
</reference>
<reference key="7">
    <citation type="journal article" date="2010" name="Jpn. J. Infect. Dis.">
        <title>Micafungin alters the expression of genes related to cell wall integrity in Candida albicans biofilms.</title>
        <authorList>
            <person name="Kaneko Y."/>
            <person name="Ohno H."/>
            <person name="Kohno S."/>
            <person name="Miyazaki Y."/>
        </authorList>
    </citation>
    <scope>INDUCTION</scope>
</reference>
<reference key="8">
    <citation type="journal article" date="2010" name="Yeast">
        <title>Mass spectrometric analysis of the secretome of Candida albicans.</title>
        <authorList>
            <person name="Sorgo A.G."/>
            <person name="Heilmann C.J."/>
            <person name="Dekker H.L."/>
            <person name="Brul S."/>
            <person name="de Koster C.G."/>
            <person name="Klis F.M."/>
        </authorList>
    </citation>
    <scope>IDENTIFICATION BY MASS SPECTROMETRY</scope>
    <scope>SUBCELLULAR LOCATION</scope>
</reference>
<organism>
    <name type="scientific">Candida albicans (strain SC5314 / ATCC MYA-2876)</name>
    <name type="common">Yeast</name>
    <dbReference type="NCBI Taxonomy" id="237561"/>
    <lineage>
        <taxon>Eukaryota</taxon>
        <taxon>Fungi</taxon>
        <taxon>Dikarya</taxon>
        <taxon>Ascomycota</taxon>
        <taxon>Saccharomycotina</taxon>
        <taxon>Pichiomycetes</taxon>
        <taxon>Debaryomycetaceae</taxon>
        <taxon>Candida/Lodderomyces clade</taxon>
        <taxon>Candida</taxon>
    </lineage>
</organism>
<keyword id="KW-0119">Carbohydrate metabolism</keyword>
<keyword id="KW-0146">Chitin degradation</keyword>
<keyword id="KW-0147">Chitin-binding</keyword>
<keyword id="KW-0325">Glycoprotein</keyword>
<keyword id="KW-0326">Glycosidase</keyword>
<keyword id="KW-0378">Hydrolase</keyword>
<keyword id="KW-0624">Polysaccharide degradation</keyword>
<keyword id="KW-1185">Reference proteome</keyword>
<keyword id="KW-0964">Secreted</keyword>
<keyword id="KW-0732">Signal</keyword>
<protein>
    <recommendedName>
        <fullName>Chitinase 3</fullName>
        <ecNumber>3.2.1.14</ecNumber>
    </recommendedName>
</protein>
<feature type="signal peptide" evidence="1">
    <location>
        <begin position="1"/>
        <end position="16"/>
    </location>
</feature>
<feature type="chain" id="PRO_0000011926" description="Chitinase 3">
    <location>
        <begin position="17"/>
        <end position="567"/>
    </location>
</feature>
<feature type="domain" description="GH18" evidence="2">
    <location>
        <begin position="23"/>
        <end position="313"/>
    </location>
</feature>
<feature type="region of interest" description="Disordered" evidence="3">
    <location>
        <begin position="313"/>
        <end position="471"/>
    </location>
</feature>
<feature type="compositionally biased region" description="Low complexity" evidence="3">
    <location>
        <begin position="319"/>
        <end position="436"/>
    </location>
</feature>
<feature type="compositionally biased region" description="Low complexity" evidence="3">
    <location>
        <begin position="444"/>
        <end position="471"/>
    </location>
</feature>
<feature type="active site" description="Proton donor" evidence="2">
    <location>
        <position position="157"/>
    </location>
</feature>
<feature type="glycosylation site" description="N-linked (GlcNAc...) asparagine" evidence="1">
    <location>
        <position position="159"/>
    </location>
</feature>
<gene>
    <name type="primary">CHT3</name>
    <name type="ordered locus">CAALFM_CR10110WA</name>
    <name type="ORF">CaO19.7586</name>
</gene>
<name>CHI3_CANAL</name>
<sequence length="567" mass="60061">MLYLLTIFSLLLPALAINARSNSNVAVYWGQNSGGSQQRLSYYCDSDAVDIVILSFMHQFPSPIQLNFANACEGTYTANGILQCQTIAEDIKYCQNKGKTILLSLGGAAGSYGFSDDATAKQFAHTLWDLFGNSKNLATNDRPFYDAVLDGFDFDIENNWSTGYPALATELRTLFQKDTSKNYYLGAAPQCPYPDASVGPLLKQSEIDFVFIQFYNNYCNLGSSSFNWDTWLNYAETDSPNKNIKLFVGVPASSRAAGSGYNDPSAVSQYLTSDILNSKYFGGISMWDVSAGWSNTNSNGNFVENMKAIVKKASPGEETTSSSTTTTTTTTSTTISSSSSSSKTSKTSTTSTTSSSISSTTSSTTSSTSSSSTSSSTSSTTSSSTTSSQISTTSTAPTSSTSLSSSTISTSASTSDTTSVTSSETTPVVTPSSLSSAITIPGDSTTTGISKSSSTKPATSTTSALSSSTTTVATIPDDKEIINTPTDTETTSKPPAIITESDATTITQNLTPSTTTKNVKTTSTNIVTEWVWAPTTLRTLTTTYQILTTRTHIETVFAEPSTVVIYN</sequence>
<dbReference type="EC" id="3.2.1.14"/>
<dbReference type="EMBL" id="U15801">
    <property type="protein sequence ID" value="AAA68016.1"/>
    <property type="molecule type" value="Genomic_DNA"/>
</dbReference>
<dbReference type="EMBL" id="CP017630">
    <property type="protein sequence ID" value="AOW31663.1"/>
    <property type="molecule type" value="Genomic_DNA"/>
</dbReference>
<dbReference type="RefSeq" id="XP_719348.1">
    <property type="nucleotide sequence ID" value="XM_714255.1"/>
</dbReference>
<dbReference type="SMR" id="P40954"/>
<dbReference type="FunCoup" id="P40954">
    <property type="interactions" value="175"/>
</dbReference>
<dbReference type="STRING" id="237561.P40954"/>
<dbReference type="CAZy" id="GH18">
    <property type="family name" value="Glycoside Hydrolase Family 18"/>
</dbReference>
<dbReference type="GlyCosmos" id="P40954">
    <property type="glycosylation" value="1 site, No reported glycans"/>
</dbReference>
<dbReference type="EnsemblFungi" id="CR_10110W_A-T">
    <property type="protein sequence ID" value="CR_10110W_A-T-p1"/>
    <property type="gene ID" value="CR_10110W_A"/>
</dbReference>
<dbReference type="GeneID" id="3638967"/>
<dbReference type="KEGG" id="cal:CAALFM_CR10110WA"/>
<dbReference type="CGD" id="CAL0000194074">
    <property type="gene designation" value="CHT3"/>
</dbReference>
<dbReference type="VEuPathDB" id="FungiDB:CR_10110W_A"/>
<dbReference type="eggNOG" id="KOG4701">
    <property type="taxonomic scope" value="Eukaryota"/>
</dbReference>
<dbReference type="HOGENOM" id="CLU_007818_7_0_1"/>
<dbReference type="InParanoid" id="P40954"/>
<dbReference type="OMA" id="GTTCFAY"/>
<dbReference type="OrthoDB" id="6020543at2759"/>
<dbReference type="Proteomes" id="UP000000559">
    <property type="component" value="Chromosome R"/>
</dbReference>
<dbReference type="GO" id="GO:0009986">
    <property type="term" value="C:cell surface"/>
    <property type="evidence" value="ECO:0000314"/>
    <property type="project" value="CGD"/>
</dbReference>
<dbReference type="GO" id="GO:0005576">
    <property type="term" value="C:extracellular region"/>
    <property type="evidence" value="ECO:0000314"/>
    <property type="project" value="CGD"/>
</dbReference>
<dbReference type="GO" id="GO:0008061">
    <property type="term" value="F:chitin binding"/>
    <property type="evidence" value="ECO:0007669"/>
    <property type="project" value="UniProtKB-KW"/>
</dbReference>
<dbReference type="GO" id="GO:0004568">
    <property type="term" value="F:chitinase activity"/>
    <property type="evidence" value="ECO:0000314"/>
    <property type="project" value="CGD"/>
</dbReference>
<dbReference type="GO" id="GO:0008843">
    <property type="term" value="F:endochitinase activity"/>
    <property type="evidence" value="ECO:0007669"/>
    <property type="project" value="UniProtKB-EC"/>
</dbReference>
<dbReference type="GO" id="GO:0000282">
    <property type="term" value="P:cellular bud site selection"/>
    <property type="evidence" value="ECO:0000315"/>
    <property type="project" value="CGD"/>
</dbReference>
<dbReference type="GO" id="GO:0006032">
    <property type="term" value="P:chitin catabolic process"/>
    <property type="evidence" value="ECO:0007669"/>
    <property type="project" value="UniProtKB-KW"/>
</dbReference>
<dbReference type="GO" id="GO:0000272">
    <property type="term" value="P:polysaccharide catabolic process"/>
    <property type="evidence" value="ECO:0007669"/>
    <property type="project" value="UniProtKB-KW"/>
</dbReference>
<dbReference type="CDD" id="cd02877">
    <property type="entry name" value="GH18_hevamine_XipI_class_III"/>
    <property type="match status" value="1"/>
</dbReference>
<dbReference type="FunFam" id="3.20.20.80:FF:000125">
    <property type="entry name" value="CTS1p Endochitinase"/>
    <property type="match status" value="1"/>
</dbReference>
<dbReference type="Gene3D" id="3.20.20.80">
    <property type="entry name" value="Glycosidases"/>
    <property type="match status" value="1"/>
</dbReference>
<dbReference type="InterPro" id="IPR045321">
    <property type="entry name" value="Cts1-like"/>
</dbReference>
<dbReference type="InterPro" id="IPR001223">
    <property type="entry name" value="Glyco_hydro18_cat"/>
</dbReference>
<dbReference type="InterPro" id="IPR001579">
    <property type="entry name" value="Glyco_hydro_18_chit_AS"/>
</dbReference>
<dbReference type="InterPro" id="IPR017853">
    <property type="entry name" value="Glycoside_hydrolase_SF"/>
</dbReference>
<dbReference type="InterPro" id="IPR050542">
    <property type="entry name" value="Glycosyl_Hydrlase18_Chitinase"/>
</dbReference>
<dbReference type="PANTHER" id="PTHR45708">
    <property type="entry name" value="ENDOCHITINASE"/>
    <property type="match status" value="1"/>
</dbReference>
<dbReference type="PANTHER" id="PTHR45708:SF49">
    <property type="entry name" value="ENDOCHITINASE"/>
    <property type="match status" value="1"/>
</dbReference>
<dbReference type="SUPFAM" id="SSF51445">
    <property type="entry name" value="(Trans)glycosidases"/>
    <property type="match status" value="1"/>
</dbReference>
<dbReference type="PROSITE" id="PS01095">
    <property type="entry name" value="GH18_1"/>
    <property type="match status" value="1"/>
</dbReference>
<dbReference type="PROSITE" id="PS51910">
    <property type="entry name" value="GH18_2"/>
    <property type="match status" value="1"/>
</dbReference>
<comment type="function">
    <text evidence="5">Chitinase involved in the remodeling of chitin in the fungal cell wall. Plays a role in cell separation.</text>
</comment>
<comment type="catalytic activity">
    <reaction evidence="5">
        <text>Random endo-hydrolysis of N-acetyl-beta-D-glucosaminide (1-&gt;4)-beta-linkages in chitin and chitodextrins.</text>
        <dbReference type="EC" id="3.2.1.14"/>
    </reaction>
</comment>
<comment type="subcellular location">
    <subcellularLocation>
        <location evidence="6">Secreted</location>
    </subcellularLocation>
</comment>
<comment type="induction">
    <text evidence="4 7 8">Expression is positively regulated by ACE2. Transcription is greater during growth of the yeast form as compared to the mycelial form, and down-regulated by micafungin treatment.</text>
</comment>
<comment type="disruption phenotype">
    <text evidence="5">Leads to strong decrease of secreted chitinase activity, as well as to the clumping or clusterings of cells from early exponential phase.</text>
</comment>
<comment type="similarity">
    <text evidence="9">Belongs to the glycosyl hydrolase 18 family. Chitinase class III subfamily.</text>
</comment>
<evidence type="ECO:0000255" key="1"/>
<evidence type="ECO:0000255" key="2">
    <source>
        <dbReference type="PROSITE-ProRule" id="PRU01258"/>
    </source>
</evidence>
<evidence type="ECO:0000256" key="3">
    <source>
        <dbReference type="SAM" id="MobiDB-lite"/>
    </source>
</evidence>
<evidence type="ECO:0000269" key="4">
    <source>
    </source>
</evidence>
<evidence type="ECO:0000269" key="5">
    <source>
    </source>
</evidence>
<evidence type="ECO:0000269" key="6">
    <source>
    </source>
</evidence>
<evidence type="ECO:0000269" key="7">
    <source>
    </source>
</evidence>
<evidence type="ECO:0000269" key="8">
    <source>
    </source>
</evidence>
<evidence type="ECO:0000305" key="9"/>
<proteinExistence type="evidence at protein level"/>